<accession>B0K6L2</accession>
<dbReference type="EC" id="2.7.1.11" evidence="1"/>
<dbReference type="EMBL" id="CP000923">
    <property type="protein sequence ID" value="ABY92488.1"/>
    <property type="molecule type" value="Genomic_DNA"/>
</dbReference>
<dbReference type="RefSeq" id="WP_003868325.1">
    <property type="nucleotide sequence ID" value="NC_010320.1"/>
</dbReference>
<dbReference type="SMR" id="B0K6L2"/>
<dbReference type="KEGG" id="tex:Teth514_1194"/>
<dbReference type="HOGENOM" id="CLU_020655_0_1_9"/>
<dbReference type="UniPathway" id="UPA00109">
    <property type="reaction ID" value="UER00182"/>
</dbReference>
<dbReference type="Proteomes" id="UP000002155">
    <property type="component" value="Chromosome"/>
</dbReference>
<dbReference type="GO" id="GO:0005945">
    <property type="term" value="C:6-phosphofructokinase complex"/>
    <property type="evidence" value="ECO:0007669"/>
    <property type="project" value="TreeGrafter"/>
</dbReference>
<dbReference type="GO" id="GO:0003872">
    <property type="term" value="F:6-phosphofructokinase activity"/>
    <property type="evidence" value="ECO:0007669"/>
    <property type="project" value="UniProtKB-UniRule"/>
</dbReference>
<dbReference type="GO" id="GO:0016208">
    <property type="term" value="F:AMP binding"/>
    <property type="evidence" value="ECO:0007669"/>
    <property type="project" value="TreeGrafter"/>
</dbReference>
<dbReference type="GO" id="GO:0005524">
    <property type="term" value="F:ATP binding"/>
    <property type="evidence" value="ECO:0007669"/>
    <property type="project" value="UniProtKB-KW"/>
</dbReference>
<dbReference type="GO" id="GO:0070095">
    <property type="term" value="F:fructose-6-phosphate binding"/>
    <property type="evidence" value="ECO:0007669"/>
    <property type="project" value="TreeGrafter"/>
</dbReference>
<dbReference type="GO" id="GO:0042802">
    <property type="term" value="F:identical protein binding"/>
    <property type="evidence" value="ECO:0007669"/>
    <property type="project" value="TreeGrafter"/>
</dbReference>
<dbReference type="GO" id="GO:0046872">
    <property type="term" value="F:metal ion binding"/>
    <property type="evidence" value="ECO:0007669"/>
    <property type="project" value="UniProtKB-KW"/>
</dbReference>
<dbReference type="GO" id="GO:0048029">
    <property type="term" value="F:monosaccharide binding"/>
    <property type="evidence" value="ECO:0007669"/>
    <property type="project" value="TreeGrafter"/>
</dbReference>
<dbReference type="GO" id="GO:0061621">
    <property type="term" value="P:canonical glycolysis"/>
    <property type="evidence" value="ECO:0007669"/>
    <property type="project" value="TreeGrafter"/>
</dbReference>
<dbReference type="GO" id="GO:0030388">
    <property type="term" value="P:fructose 1,6-bisphosphate metabolic process"/>
    <property type="evidence" value="ECO:0007669"/>
    <property type="project" value="TreeGrafter"/>
</dbReference>
<dbReference type="GO" id="GO:0006002">
    <property type="term" value="P:fructose 6-phosphate metabolic process"/>
    <property type="evidence" value="ECO:0007669"/>
    <property type="project" value="InterPro"/>
</dbReference>
<dbReference type="FunFam" id="3.40.50.450:FF:000001">
    <property type="entry name" value="ATP-dependent 6-phosphofructokinase"/>
    <property type="match status" value="1"/>
</dbReference>
<dbReference type="FunFam" id="3.40.50.460:FF:000002">
    <property type="entry name" value="ATP-dependent 6-phosphofructokinase"/>
    <property type="match status" value="1"/>
</dbReference>
<dbReference type="Gene3D" id="3.40.50.450">
    <property type="match status" value="1"/>
</dbReference>
<dbReference type="Gene3D" id="3.40.50.460">
    <property type="entry name" value="Phosphofructokinase domain"/>
    <property type="match status" value="1"/>
</dbReference>
<dbReference type="HAMAP" id="MF_00339">
    <property type="entry name" value="Phosphofructokinase_I_B1"/>
    <property type="match status" value="1"/>
</dbReference>
<dbReference type="InterPro" id="IPR022953">
    <property type="entry name" value="ATP_PFK"/>
</dbReference>
<dbReference type="InterPro" id="IPR012003">
    <property type="entry name" value="ATP_PFK_prok-type"/>
</dbReference>
<dbReference type="InterPro" id="IPR012828">
    <property type="entry name" value="PFKA_ATP_prok"/>
</dbReference>
<dbReference type="InterPro" id="IPR015912">
    <property type="entry name" value="Phosphofructokinase_CS"/>
</dbReference>
<dbReference type="InterPro" id="IPR000023">
    <property type="entry name" value="Phosphofructokinase_dom"/>
</dbReference>
<dbReference type="InterPro" id="IPR035966">
    <property type="entry name" value="PKF_sf"/>
</dbReference>
<dbReference type="NCBIfam" id="TIGR02482">
    <property type="entry name" value="PFKA_ATP"/>
    <property type="match status" value="1"/>
</dbReference>
<dbReference type="NCBIfam" id="NF002872">
    <property type="entry name" value="PRK03202.1"/>
    <property type="match status" value="1"/>
</dbReference>
<dbReference type="PANTHER" id="PTHR13697:SF4">
    <property type="entry name" value="ATP-DEPENDENT 6-PHOSPHOFRUCTOKINASE"/>
    <property type="match status" value="1"/>
</dbReference>
<dbReference type="PANTHER" id="PTHR13697">
    <property type="entry name" value="PHOSPHOFRUCTOKINASE"/>
    <property type="match status" value="1"/>
</dbReference>
<dbReference type="Pfam" id="PF00365">
    <property type="entry name" value="PFK"/>
    <property type="match status" value="1"/>
</dbReference>
<dbReference type="PIRSF" id="PIRSF000532">
    <property type="entry name" value="ATP_PFK_prok"/>
    <property type="match status" value="1"/>
</dbReference>
<dbReference type="PRINTS" id="PR00476">
    <property type="entry name" value="PHFRCTKINASE"/>
</dbReference>
<dbReference type="SUPFAM" id="SSF53784">
    <property type="entry name" value="Phosphofructokinase"/>
    <property type="match status" value="1"/>
</dbReference>
<dbReference type="PROSITE" id="PS00433">
    <property type="entry name" value="PHOSPHOFRUCTOKINASE"/>
    <property type="match status" value="1"/>
</dbReference>
<reference key="1">
    <citation type="submission" date="2008-01" db="EMBL/GenBank/DDBJ databases">
        <title>Complete sequence of Thermoanaerobacter sp. X514.</title>
        <authorList>
            <consortium name="US DOE Joint Genome Institute"/>
            <person name="Copeland A."/>
            <person name="Lucas S."/>
            <person name="Lapidus A."/>
            <person name="Barry K."/>
            <person name="Glavina del Rio T."/>
            <person name="Dalin E."/>
            <person name="Tice H."/>
            <person name="Pitluck S."/>
            <person name="Bruce D."/>
            <person name="Goodwin L."/>
            <person name="Saunders E."/>
            <person name="Brettin T."/>
            <person name="Detter J.C."/>
            <person name="Han C."/>
            <person name="Schmutz J."/>
            <person name="Larimer F."/>
            <person name="Land M."/>
            <person name="Hauser L."/>
            <person name="Kyrpides N."/>
            <person name="Kim E."/>
            <person name="Hemme C."/>
            <person name="Fields M.W."/>
            <person name="He Z."/>
            <person name="Zhou J."/>
            <person name="Richardson P."/>
        </authorList>
    </citation>
    <scope>NUCLEOTIDE SEQUENCE [LARGE SCALE GENOMIC DNA]</scope>
    <source>
        <strain>X514</strain>
    </source>
</reference>
<comment type="function">
    <text evidence="1">Catalyzes the phosphorylation of D-fructose 6-phosphate to fructose 1,6-bisphosphate by ATP, the first committing step of glycolysis.</text>
</comment>
<comment type="catalytic activity">
    <reaction evidence="1">
        <text>beta-D-fructose 6-phosphate + ATP = beta-D-fructose 1,6-bisphosphate + ADP + H(+)</text>
        <dbReference type="Rhea" id="RHEA:16109"/>
        <dbReference type="ChEBI" id="CHEBI:15378"/>
        <dbReference type="ChEBI" id="CHEBI:30616"/>
        <dbReference type="ChEBI" id="CHEBI:32966"/>
        <dbReference type="ChEBI" id="CHEBI:57634"/>
        <dbReference type="ChEBI" id="CHEBI:456216"/>
        <dbReference type="EC" id="2.7.1.11"/>
    </reaction>
</comment>
<comment type="cofactor">
    <cofactor evidence="1">
        <name>Mg(2+)</name>
        <dbReference type="ChEBI" id="CHEBI:18420"/>
    </cofactor>
</comment>
<comment type="activity regulation">
    <text evidence="1">Allosterically activated by ADP and other diphosphonucleosides, and allosterically inhibited by phosphoenolpyruvate.</text>
</comment>
<comment type="pathway">
    <text evidence="1">Carbohydrate degradation; glycolysis; D-glyceraldehyde 3-phosphate and glycerone phosphate from D-glucose: step 3/4.</text>
</comment>
<comment type="subunit">
    <text evidence="1">Homotetramer.</text>
</comment>
<comment type="subcellular location">
    <subcellularLocation>
        <location evidence="1">Cytoplasm</location>
    </subcellularLocation>
</comment>
<comment type="similarity">
    <text evidence="1">Belongs to the phosphofructokinase type A (PFKA) family. ATP-dependent PFK group I subfamily. Prokaryotic clade 'B1' sub-subfamily.</text>
</comment>
<organism>
    <name type="scientific">Thermoanaerobacter sp. (strain X514)</name>
    <dbReference type="NCBI Taxonomy" id="399726"/>
    <lineage>
        <taxon>Bacteria</taxon>
        <taxon>Bacillati</taxon>
        <taxon>Bacillota</taxon>
        <taxon>Clostridia</taxon>
        <taxon>Thermoanaerobacterales</taxon>
        <taxon>Thermoanaerobacteraceae</taxon>
        <taxon>Thermoanaerobacter</taxon>
    </lineage>
</organism>
<feature type="chain" id="PRO_1000120065" description="ATP-dependent 6-phosphofructokinase">
    <location>
        <begin position="1"/>
        <end position="321"/>
    </location>
</feature>
<feature type="active site" description="Proton acceptor" evidence="1">
    <location>
        <position position="128"/>
    </location>
</feature>
<feature type="binding site" evidence="1">
    <location>
        <position position="11"/>
    </location>
    <ligand>
        <name>ATP</name>
        <dbReference type="ChEBI" id="CHEBI:30616"/>
    </ligand>
</feature>
<feature type="binding site" evidence="1">
    <location>
        <begin position="21"/>
        <end position="25"/>
    </location>
    <ligand>
        <name>ADP</name>
        <dbReference type="ChEBI" id="CHEBI:456216"/>
        <note>allosteric activator; ligand shared between dimeric partners</note>
    </ligand>
</feature>
<feature type="binding site" evidence="1">
    <location>
        <begin position="72"/>
        <end position="73"/>
    </location>
    <ligand>
        <name>ATP</name>
        <dbReference type="ChEBI" id="CHEBI:30616"/>
    </ligand>
</feature>
<feature type="binding site" evidence="1">
    <location>
        <begin position="102"/>
        <end position="105"/>
    </location>
    <ligand>
        <name>ATP</name>
        <dbReference type="ChEBI" id="CHEBI:30616"/>
    </ligand>
</feature>
<feature type="binding site" evidence="1">
    <location>
        <position position="103"/>
    </location>
    <ligand>
        <name>Mg(2+)</name>
        <dbReference type="ChEBI" id="CHEBI:18420"/>
        <note>catalytic</note>
    </ligand>
</feature>
<feature type="binding site" description="in other chain" evidence="1">
    <location>
        <begin position="126"/>
        <end position="128"/>
    </location>
    <ligand>
        <name>substrate</name>
        <note>ligand shared between dimeric partners</note>
    </ligand>
</feature>
<feature type="binding site" description="in other chain" evidence="1">
    <location>
        <position position="155"/>
    </location>
    <ligand>
        <name>ADP</name>
        <dbReference type="ChEBI" id="CHEBI:456216"/>
        <note>allosteric activator; ligand shared between dimeric partners</note>
    </ligand>
</feature>
<feature type="binding site" evidence="1">
    <location>
        <position position="163"/>
    </location>
    <ligand>
        <name>substrate</name>
        <note>ligand shared between dimeric partners</note>
    </ligand>
</feature>
<feature type="binding site" description="in other chain" evidence="1">
    <location>
        <begin position="170"/>
        <end position="172"/>
    </location>
    <ligand>
        <name>substrate</name>
        <note>ligand shared between dimeric partners</note>
    </ligand>
</feature>
<feature type="binding site" description="in other chain" evidence="1">
    <location>
        <begin position="186"/>
        <end position="188"/>
    </location>
    <ligand>
        <name>ADP</name>
        <dbReference type="ChEBI" id="CHEBI:456216"/>
        <note>allosteric activator; ligand shared between dimeric partners</note>
    </ligand>
</feature>
<feature type="binding site" description="in other chain" evidence="1">
    <location>
        <position position="212"/>
    </location>
    <ligand>
        <name>ADP</name>
        <dbReference type="ChEBI" id="CHEBI:456216"/>
        <note>allosteric activator; ligand shared between dimeric partners</note>
    </ligand>
</feature>
<feature type="binding site" description="in other chain" evidence="1">
    <location>
        <begin position="214"/>
        <end position="216"/>
    </location>
    <ligand>
        <name>ADP</name>
        <dbReference type="ChEBI" id="CHEBI:456216"/>
        <note>allosteric activator; ligand shared between dimeric partners</note>
    </ligand>
</feature>
<feature type="binding site" description="in other chain" evidence="1">
    <location>
        <position position="223"/>
    </location>
    <ligand>
        <name>substrate</name>
        <note>ligand shared between dimeric partners</note>
    </ligand>
</feature>
<feature type="binding site" evidence="1">
    <location>
        <position position="245"/>
    </location>
    <ligand>
        <name>substrate</name>
        <note>ligand shared between dimeric partners</note>
    </ligand>
</feature>
<feature type="binding site" description="in other chain" evidence="1">
    <location>
        <begin position="251"/>
        <end position="254"/>
    </location>
    <ligand>
        <name>substrate</name>
        <note>ligand shared between dimeric partners</note>
    </ligand>
</feature>
<evidence type="ECO:0000255" key="1">
    <source>
        <dbReference type="HAMAP-Rule" id="MF_00339"/>
    </source>
</evidence>
<proteinExistence type="inferred from homology"/>
<keyword id="KW-0021">Allosteric enzyme</keyword>
<keyword id="KW-0067">ATP-binding</keyword>
<keyword id="KW-0963">Cytoplasm</keyword>
<keyword id="KW-0324">Glycolysis</keyword>
<keyword id="KW-0418">Kinase</keyword>
<keyword id="KW-0460">Magnesium</keyword>
<keyword id="KW-0479">Metal-binding</keyword>
<keyword id="KW-0547">Nucleotide-binding</keyword>
<keyword id="KW-0808">Transferase</keyword>
<name>PFKA_THEPX</name>
<sequence>MKTIGILTSGGDAPGMNAAIRAVVRTGIYYGLKVKGIMRGYAGLVEDEVIDLNLSSVGDILQKGGTILRTARCEEFKKKEVRKKAYETLQKHGIEGLVVIGGDGSFRGAQLLSEEWNVNTIGIPGTIDNDIPCTDYTIGFDTACNTVIDAINKIRDTATSHERANIIEVMGRNAGYIALYAGLAGGAEMIILPEVEWSIDELCDKITYGIKRGKLHHIIVLAEGVMSAPELAKMIKERLPKLDLRYTILGHIQRGGAPTVMDRVLASQMGARAVELLLENKTKRIISIRNNQIVDDDIDEALSMKKEFNRKLYELSKILSI</sequence>
<gene>
    <name evidence="1" type="primary">pfkA</name>
    <name type="ordered locus">Teth514_1194</name>
</gene>
<protein>
    <recommendedName>
        <fullName evidence="1">ATP-dependent 6-phosphofructokinase</fullName>
        <shortName evidence="1">ATP-PFK</shortName>
        <shortName evidence="1">Phosphofructokinase</shortName>
        <ecNumber evidence="1">2.7.1.11</ecNumber>
    </recommendedName>
    <alternativeName>
        <fullName evidence="1">Phosphohexokinase</fullName>
    </alternativeName>
</protein>